<protein>
    <recommendedName>
        <fullName evidence="1">Protein translocase subunit SecY</fullName>
    </recommendedName>
</protein>
<dbReference type="EMBL" id="BX571857">
    <property type="protein sequence ID" value="CAG43932.1"/>
    <property type="molecule type" value="Genomic_DNA"/>
</dbReference>
<dbReference type="RefSeq" id="WP_000616784.1">
    <property type="nucleotide sequence ID" value="NC_002953.3"/>
</dbReference>
<dbReference type="SMR" id="Q6G791"/>
<dbReference type="KEGG" id="sas:SAS2121"/>
<dbReference type="HOGENOM" id="CLU_030313_0_1_9"/>
<dbReference type="GO" id="GO:0005886">
    <property type="term" value="C:plasma membrane"/>
    <property type="evidence" value="ECO:0007669"/>
    <property type="project" value="UniProtKB-SubCell"/>
</dbReference>
<dbReference type="GO" id="GO:0065002">
    <property type="term" value="P:intracellular protein transmembrane transport"/>
    <property type="evidence" value="ECO:0007669"/>
    <property type="project" value="UniProtKB-UniRule"/>
</dbReference>
<dbReference type="GO" id="GO:0006605">
    <property type="term" value="P:protein targeting"/>
    <property type="evidence" value="ECO:0007669"/>
    <property type="project" value="UniProtKB-UniRule"/>
</dbReference>
<dbReference type="GO" id="GO:0043952">
    <property type="term" value="P:protein transport by the Sec complex"/>
    <property type="evidence" value="ECO:0007669"/>
    <property type="project" value="UniProtKB-UniRule"/>
</dbReference>
<dbReference type="FunFam" id="1.10.3370.10:FF:000001">
    <property type="entry name" value="Preprotein translocase subunit SecY"/>
    <property type="match status" value="1"/>
</dbReference>
<dbReference type="Gene3D" id="1.10.3370.10">
    <property type="entry name" value="SecY subunit domain"/>
    <property type="match status" value="1"/>
</dbReference>
<dbReference type="HAMAP" id="MF_01465">
    <property type="entry name" value="SecY"/>
    <property type="match status" value="1"/>
</dbReference>
<dbReference type="InterPro" id="IPR026593">
    <property type="entry name" value="SecY"/>
</dbReference>
<dbReference type="InterPro" id="IPR002208">
    <property type="entry name" value="SecY/SEC61-alpha"/>
</dbReference>
<dbReference type="InterPro" id="IPR030659">
    <property type="entry name" value="SecY_CS"/>
</dbReference>
<dbReference type="InterPro" id="IPR023201">
    <property type="entry name" value="SecY_dom_sf"/>
</dbReference>
<dbReference type="NCBIfam" id="TIGR00967">
    <property type="entry name" value="3a0501s007"/>
    <property type="match status" value="1"/>
</dbReference>
<dbReference type="PANTHER" id="PTHR10906">
    <property type="entry name" value="SECY/SEC61-ALPHA FAMILY MEMBER"/>
    <property type="match status" value="1"/>
</dbReference>
<dbReference type="Pfam" id="PF00344">
    <property type="entry name" value="SecY"/>
    <property type="match status" value="1"/>
</dbReference>
<dbReference type="PIRSF" id="PIRSF004557">
    <property type="entry name" value="SecY"/>
    <property type="match status" value="1"/>
</dbReference>
<dbReference type="PRINTS" id="PR00303">
    <property type="entry name" value="SECYTRNLCASE"/>
</dbReference>
<dbReference type="SUPFAM" id="SSF103491">
    <property type="entry name" value="Preprotein translocase SecY subunit"/>
    <property type="match status" value="1"/>
</dbReference>
<dbReference type="PROSITE" id="PS00755">
    <property type="entry name" value="SECY_1"/>
    <property type="match status" value="1"/>
</dbReference>
<dbReference type="PROSITE" id="PS00756">
    <property type="entry name" value="SECY_2"/>
    <property type="match status" value="1"/>
</dbReference>
<feature type="chain" id="PRO_0000131744" description="Protein translocase subunit SecY">
    <location>
        <begin position="1"/>
        <end position="430"/>
    </location>
</feature>
<feature type="transmembrane region" description="Helical" evidence="1">
    <location>
        <begin position="18"/>
        <end position="38"/>
    </location>
</feature>
<feature type="transmembrane region" description="Helical" evidence="1">
    <location>
        <begin position="68"/>
        <end position="88"/>
    </location>
</feature>
<feature type="transmembrane region" description="Helical" evidence="1">
    <location>
        <begin position="117"/>
        <end position="137"/>
    </location>
</feature>
<feature type="transmembrane region" description="Helical" evidence="1">
    <location>
        <begin position="147"/>
        <end position="167"/>
    </location>
</feature>
<feature type="transmembrane region" description="Helical" evidence="1">
    <location>
        <begin position="179"/>
        <end position="199"/>
    </location>
</feature>
<feature type="transmembrane region" description="Helical" evidence="1">
    <location>
        <begin position="217"/>
        <end position="237"/>
    </location>
</feature>
<feature type="transmembrane region" description="Helical" evidence="1">
    <location>
        <begin position="269"/>
        <end position="289"/>
    </location>
</feature>
<feature type="transmembrane region" description="Helical" evidence="1">
    <location>
        <begin position="308"/>
        <end position="328"/>
    </location>
</feature>
<feature type="transmembrane region" description="Helical" evidence="1">
    <location>
        <begin position="368"/>
        <end position="388"/>
    </location>
</feature>
<feature type="transmembrane region" description="Helical" evidence="1">
    <location>
        <begin position="389"/>
        <end position="409"/>
    </location>
</feature>
<keyword id="KW-1003">Cell membrane</keyword>
<keyword id="KW-0472">Membrane</keyword>
<keyword id="KW-0653">Protein transport</keyword>
<keyword id="KW-0811">Translocation</keyword>
<keyword id="KW-0812">Transmembrane</keyword>
<keyword id="KW-1133">Transmembrane helix</keyword>
<keyword id="KW-0813">Transport</keyword>
<comment type="function">
    <text evidence="1">The central subunit of the protein translocation channel SecYEG. Consists of two halves formed by TMs 1-5 and 6-10. These two domains form a lateral gate at the front which open onto the bilayer between TMs 2 and 7, and are clamped together by SecE at the back. The channel is closed by both a pore ring composed of hydrophobic SecY resides and a short helix (helix 2A) on the extracellular side of the membrane which forms a plug. The plug probably moves laterally to allow the channel to open. The ring and the pore may move independently.</text>
</comment>
<comment type="subunit">
    <text evidence="1">Component of the Sec protein translocase complex. Heterotrimer consisting of SecY, SecE and SecG subunits. The heterotrimers can form oligomers, although 1 heterotrimer is thought to be able to translocate proteins. Interacts with the ribosome. Interacts with SecDF, and other proteins may be involved. Interacts with SecA.</text>
</comment>
<comment type="subcellular location">
    <subcellularLocation>
        <location evidence="1">Cell membrane</location>
        <topology evidence="1">Multi-pass membrane protein</topology>
    </subcellularLocation>
</comment>
<comment type="similarity">
    <text evidence="1">Belongs to the SecY/SEC61-alpha family.</text>
</comment>
<accession>Q6G791</accession>
<evidence type="ECO:0000255" key="1">
    <source>
        <dbReference type="HAMAP-Rule" id="MF_01465"/>
    </source>
</evidence>
<sequence>MIQTLVNFFRTKEVRNKIFFTLAMLVIFKIGTYIPAPGVNPAAFDNPQGSQGATELLNTFGGGALKRFSIFAMGIVPYITASIVMQLLQMDIVPKFSEWAKQGEVGRRKLNNVTRYLAISLAFIQSIGMAFQFNNYLKGALIINQSIMSYLLIALVLTAGTAFLIWLGDQITQFGVGNGISIIIFAGILSTLPASLIQFGQTAFVGQEDTSLAWLKVLGLLVSLILLTVGAIYVLEAVRKIPIQYAKKQTAQRLGSQATYLPLKVNSAGVIPVIFAMAFFLLPRTLTLFYPDKEWAQNIANAANPSSNVGMVVYIVLIILFTYFYAFVQVNPEKMADNLKKQGSYVPGIRPGEQTKKYITKVLYRLTFVGSIFLAVISILPILATKFMGLPQSIQIGGTSLLIVIGVAIETMKSLEAQVSQKEYKGFGGR</sequence>
<proteinExistence type="inferred from homology"/>
<gene>
    <name evidence="1" type="primary">secY</name>
    <name type="ordered locus">SAS2121</name>
</gene>
<name>SECY_STAAS</name>
<reference key="1">
    <citation type="journal article" date="2004" name="Proc. Natl. Acad. Sci. U.S.A.">
        <title>Complete genomes of two clinical Staphylococcus aureus strains: evidence for the rapid evolution of virulence and drug resistance.</title>
        <authorList>
            <person name="Holden M.T.G."/>
            <person name="Feil E.J."/>
            <person name="Lindsay J.A."/>
            <person name="Peacock S.J."/>
            <person name="Day N.P.J."/>
            <person name="Enright M.C."/>
            <person name="Foster T.J."/>
            <person name="Moore C.E."/>
            <person name="Hurst L."/>
            <person name="Atkin R."/>
            <person name="Barron A."/>
            <person name="Bason N."/>
            <person name="Bentley S.D."/>
            <person name="Chillingworth C."/>
            <person name="Chillingworth T."/>
            <person name="Churcher C."/>
            <person name="Clark L."/>
            <person name="Corton C."/>
            <person name="Cronin A."/>
            <person name="Doggett J."/>
            <person name="Dowd L."/>
            <person name="Feltwell T."/>
            <person name="Hance Z."/>
            <person name="Harris B."/>
            <person name="Hauser H."/>
            <person name="Holroyd S."/>
            <person name="Jagels K."/>
            <person name="James K.D."/>
            <person name="Lennard N."/>
            <person name="Line A."/>
            <person name="Mayes R."/>
            <person name="Moule S."/>
            <person name="Mungall K."/>
            <person name="Ormond D."/>
            <person name="Quail M.A."/>
            <person name="Rabbinowitsch E."/>
            <person name="Rutherford K.M."/>
            <person name="Sanders M."/>
            <person name="Sharp S."/>
            <person name="Simmonds M."/>
            <person name="Stevens K."/>
            <person name="Whitehead S."/>
            <person name="Barrell B.G."/>
            <person name="Spratt B.G."/>
            <person name="Parkhill J."/>
        </authorList>
    </citation>
    <scope>NUCLEOTIDE SEQUENCE [LARGE SCALE GENOMIC DNA]</scope>
    <source>
        <strain>MSSA476</strain>
    </source>
</reference>
<organism>
    <name type="scientific">Staphylococcus aureus (strain MSSA476)</name>
    <dbReference type="NCBI Taxonomy" id="282459"/>
    <lineage>
        <taxon>Bacteria</taxon>
        <taxon>Bacillati</taxon>
        <taxon>Bacillota</taxon>
        <taxon>Bacilli</taxon>
        <taxon>Bacillales</taxon>
        <taxon>Staphylococcaceae</taxon>
        <taxon>Staphylococcus</taxon>
    </lineage>
</organism>